<organism>
    <name type="scientific">Cupriavidus pinatubonensis (strain JMP 134 / LMG 1197)</name>
    <name type="common">Cupriavidus necator (strain JMP 134)</name>
    <dbReference type="NCBI Taxonomy" id="264198"/>
    <lineage>
        <taxon>Bacteria</taxon>
        <taxon>Pseudomonadati</taxon>
        <taxon>Pseudomonadota</taxon>
        <taxon>Betaproteobacteria</taxon>
        <taxon>Burkholderiales</taxon>
        <taxon>Burkholderiaceae</taxon>
        <taxon>Cupriavidus</taxon>
    </lineage>
</organism>
<accession>Q46PH7</accession>
<name>CHEB2_CUPPJ</name>
<comment type="function">
    <text evidence="1">Involved in chemotaxis. Part of a chemotaxis signal transduction system that modulates chemotaxis in response to various stimuli. Catalyzes the demethylation of specific methylglutamate residues introduced into the chemoreceptors (methyl-accepting chemotaxis proteins or MCP) by CheR. Also mediates the irreversible deamidation of specific glutamine residues to glutamic acid.</text>
</comment>
<comment type="catalytic activity">
    <reaction evidence="1">
        <text>[protein]-L-glutamate 5-O-methyl ester + H2O = L-glutamyl-[protein] + methanol + H(+)</text>
        <dbReference type="Rhea" id="RHEA:23236"/>
        <dbReference type="Rhea" id="RHEA-COMP:10208"/>
        <dbReference type="Rhea" id="RHEA-COMP:10311"/>
        <dbReference type="ChEBI" id="CHEBI:15377"/>
        <dbReference type="ChEBI" id="CHEBI:15378"/>
        <dbReference type="ChEBI" id="CHEBI:17790"/>
        <dbReference type="ChEBI" id="CHEBI:29973"/>
        <dbReference type="ChEBI" id="CHEBI:82795"/>
        <dbReference type="EC" id="3.1.1.61"/>
    </reaction>
</comment>
<comment type="catalytic activity">
    <reaction evidence="1">
        <text>L-glutaminyl-[protein] + H2O = L-glutamyl-[protein] + NH4(+)</text>
        <dbReference type="Rhea" id="RHEA:16441"/>
        <dbReference type="Rhea" id="RHEA-COMP:10207"/>
        <dbReference type="Rhea" id="RHEA-COMP:10208"/>
        <dbReference type="ChEBI" id="CHEBI:15377"/>
        <dbReference type="ChEBI" id="CHEBI:28938"/>
        <dbReference type="ChEBI" id="CHEBI:29973"/>
        <dbReference type="ChEBI" id="CHEBI:30011"/>
        <dbReference type="EC" id="3.5.1.44"/>
    </reaction>
</comment>
<comment type="subcellular location">
    <subcellularLocation>
        <location evidence="1">Cytoplasm</location>
    </subcellularLocation>
</comment>
<comment type="domain">
    <text evidence="1">Contains a C-terminal catalytic domain, and an N-terminal region which modulates catalytic activity.</text>
</comment>
<comment type="PTM">
    <text evidence="1">Phosphorylated by CheA. Phosphorylation of the N-terminal regulatory domain activates the methylesterase activity.</text>
</comment>
<comment type="similarity">
    <text evidence="1">Belongs to the CheB family.</text>
</comment>
<dbReference type="EC" id="3.1.1.61" evidence="1"/>
<dbReference type="EC" id="3.5.1.44" evidence="1"/>
<dbReference type="EMBL" id="CP000091">
    <property type="protein sequence ID" value="AAZ64957.1"/>
    <property type="molecule type" value="Genomic_DNA"/>
</dbReference>
<dbReference type="SMR" id="Q46PH7"/>
<dbReference type="STRING" id="264198.Reut_B5612"/>
<dbReference type="KEGG" id="reu:Reut_B5612"/>
<dbReference type="eggNOG" id="COG2201">
    <property type="taxonomic scope" value="Bacteria"/>
</dbReference>
<dbReference type="HOGENOM" id="CLU_000445_51_0_4"/>
<dbReference type="OrthoDB" id="9793421at2"/>
<dbReference type="GO" id="GO:0005737">
    <property type="term" value="C:cytoplasm"/>
    <property type="evidence" value="ECO:0007669"/>
    <property type="project" value="UniProtKB-SubCell"/>
</dbReference>
<dbReference type="GO" id="GO:0000156">
    <property type="term" value="F:phosphorelay response regulator activity"/>
    <property type="evidence" value="ECO:0007669"/>
    <property type="project" value="InterPro"/>
</dbReference>
<dbReference type="GO" id="GO:0008984">
    <property type="term" value="F:protein-glutamate methylesterase activity"/>
    <property type="evidence" value="ECO:0007669"/>
    <property type="project" value="UniProtKB-UniRule"/>
</dbReference>
<dbReference type="GO" id="GO:0050568">
    <property type="term" value="F:protein-glutamine glutaminase activity"/>
    <property type="evidence" value="ECO:0007669"/>
    <property type="project" value="UniProtKB-UniRule"/>
</dbReference>
<dbReference type="GO" id="GO:0006935">
    <property type="term" value="P:chemotaxis"/>
    <property type="evidence" value="ECO:0007669"/>
    <property type="project" value="UniProtKB-UniRule"/>
</dbReference>
<dbReference type="CDD" id="cd16432">
    <property type="entry name" value="CheB_Rec"/>
    <property type="match status" value="1"/>
</dbReference>
<dbReference type="CDD" id="cd17541">
    <property type="entry name" value="REC_CheB-like"/>
    <property type="match status" value="1"/>
</dbReference>
<dbReference type="FunFam" id="3.40.50.2300:FF:000060">
    <property type="entry name" value="Protein-glutamate methylesterase/protein-glutamine glutaminase"/>
    <property type="match status" value="1"/>
</dbReference>
<dbReference type="Gene3D" id="3.40.50.2300">
    <property type="match status" value="1"/>
</dbReference>
<dbReference type="Gene3D" id="3.40.50.180">
    <property type="entry name" value="Methylesterase CheB, C-terminal domain"/>
    <property type="match status" value="1"/>
</dbReference>
<dbReference type="HAMAP" id="MF_00099">
    <property type="entry name" value="CheB_chemtxs"/>
    <property type="match status" value="1"/>
</dbReference>
<dbReference type="InterPro" id="IPR008248">
    <property type="entry name" value="CheB-like"/>
</dbReference>
<dbReference type="InterPro" id="IPR035909">
    <property type="entry name" value="CheB_C"/>
</dbReference>
<dbReference type="InterPro" id="IPR011006">
    <property type="entry name" value="CheY-like_superfamily"/>
</dbReference>
<dbReference type="InterPro" id="IPR000673">
    <property type="entry name" value="Sig_transdc_resp-reg_Me-estase"/>
</dbReference>
<dbReference type="InterPro" id="IPR001789">
    <property type="entry name" value="Sig_transdc_resp-reg_receiver"/>
</dbReference>
<dbReference type="NCBIfam" id="NF001965">
    <property type="entry name" value="PRK00742.1"/>
    <property type="match status" value="1"/>
</dbReference>
<dbReference type="NCBIfam" id="NF009206">
    <property type="entry name" value="PRK12555.1"/>
    <property type="match status" value="1"/>
</dbReference>
<dbReference type="PANTHER" id="PTHR42872">
    <property type="entry name" value="PROTEIN-GLUTAMATE METHYLESTERASE/PROTEIN-GLUTAMINE GLUTAMINASE"/>
    <property type="match status" value="1"/>
</dbReference>
<dbReference type="PANTHER" id="PTHR42872:SF6">
    <property type="entry name" value="PROTEIN-GLUTAMATE METHYLESTERASE_PROTEIN-GLUTAMINE GLUTAMINASE"/>
    <property type="match status" value="1"/>
</dbReference>
<dbReference type="Pfam" id="PF01339">
    <property type="entry name" value="CheB_methylest"/>
    <property type="match status" value="1"/>
</dbReference>
<dbReference type="Pfam" id="PF00072">
    <property type="entry name" value="Response_reg"/>
    <property type="match status" value="1"/>
</dbReference>
<dbReference type="PIRSF" id="PIRSF000876">
    <property type="entry name" value="RR_chemtxs_CheB"/>
    <property type="match status" value="1"/>
</dbReference>
<dbReference type="SMART" id="SM00448">
    <property type="entry name" value="REC"/>
    <property type="match status" value="1"/>
</dbReference>
<dbReference type="SUPFAM" id="SSF52172">
    <property type="entry name" value="CheY-like"/>
    <property type="match status" value="1"/>
</dbReference>
<dbReference type="SUPFAM" id="SSF52738">
    <property type="entry name" value="Methylesterase CheB, C-terminal domain"/>
    <property type="match status" value="1"/>
</dbReference>
<dbReference type="PROSITE" id="PS50122">
    <property type="entry name" value="CHEB"/>
    <property type="match status" value="1"/>
</dbReference>
<dbReference type="PROSITE" id="PS50110">
    <property type="entry name" value="RESPONSE_REGULATORY"/>
    <property type="match status" value="1"/>
</dbReference>
<proteinExistence type="inferred from homology"/>
<gene>
    <name evidence="1" type="primary">cheB2</name>
    <name type="ordered locus">Reut_B5612</name>
</gene>
<evidence type="ECO:0000255" key="1">
    <source>
        <dbReference type="HAMAP-Rule" id="MF_00099"/>
    </source>
</evidence>
<feature type="chain" id="PRO_0000225480" description="Protein-glutamate methylesterase/protein-glutamine glutaminase 2">
    <location>
        <begin position="1"/>
        <end position="356"/>
    </location>
</feature>
<feature type="domain" description="Response regulatory" evidence="1">
    <location>
        <begin position="7"/>
        <end position="124"/>
    </location>
</feature>
<feature type="domain" description="CheB-type methylesterase" evidence="1">
    <location>
        <begin position="157"/>
        <end position="349"/>
    </location>
</feature>
<feature type="active site" evidence="1">
    <location>
        <position position="169"/>
    </location>
</feature>
<feature type="active site" evidence="1">
    <location>
        <position position="195"/>
    </location>
</feature>
<feature type="active site" evidence="1">
    <location>
        <position position="291"/>
    </location>
</feature>
<feature type="modified residue" description="4-aspartylphosphate" evidence="1">
    <location>
        <position position="58"/>
    </location>
</feature>
<sequence length="356" mass="38528">MTAAKIKVLCVDDSALIRSLMTEIINSQPDMEVVGTAPDPLVAREMIKQLNPDVLTLDVEMPRMDGLDFLERLMRLRPMPVLMVSSLTERGSEITMRALELGAVDFVTKPKLGIRDGLMEYTDTIADKIRAASRARVRQAPQAASGTPATPMLRSPLLSTEKLIILGASTGGTEAIKDFLMPLPPDSPAVLIVQHMPAGFTRSFAQRLDGLCRITVKEAEHGERVLPGYAYIAPGDSHLRLARSGANYVAHLSQEAPVNRHRPSVDVLFDSAAEHGGKNVIGVILTGMGKDGAKGMLRMREAGAYNLAQDESTCIVFGMPKEAIAAGGVHEVVPLHSMTQRVMARLATYGTRAQRV</sequence>
<reference key="1">
    <citation type="journal article" date="2010" name="PLoS ONE">
        <title>The complete multipartite genome sequence of Cupriavidus necator JMP134, a versatile pollutant degrader.</title>
        <authorList>
            <person name="Lykidis A."/>
            <person name="Perez-Pantoja D."/>
            <person name="Ledger T."/>
            <person name="Mavromatis K."/>
            <person name="Anderson I.J."/>
            <person name="Ivanova N.N."/>
            <person name="Hooper S.D."/>
            <person name="Lapidus A."/>
            <person name="Lucas S."/>
            <person name="Gonzalez B."/>
            <person name="Kyrpides N.C."/>
        </authorList>
    </citation>
    <scope>NUCLEOTIDE SEQUENCE [LARGE SCALE GENOMIC DNA]</scope>
    <source>
        <strain>JMP134 / LMG 1197</strain>
    </source>
</reference>
<protein>
    <recommendedName>
        <fullName evidence="1">Protein-glutamate methylesterase/protein-glutamine glutaminase 2</fullName>
        <ecNumber evidence="1">3.1.1.61</ecNumber>
        <ecNumber evidence="1">3.5.1.44</ecNumber>
    </recommendedName>
</protein>
<keyword id="KW-0145">Chemotaxis</keyword>
<keyword id="KW-0963">Cytoplasm</keyword>
<keyword id="KW-0378">Hydrolase</keyword>
<keyword id="KW-0597">Phosphoprotein</keyword>